<reference key="1">
    <citation type="journal article" date="1992" name="J. Biol. Chem.">
        <title>Nucleotide sequence and deduced functions of a set of cotranscribed genes of Streptomyces coelicolor A3(2) including the polyketide synthase for the antibiotic actinorhodin.</title>
        <authorList>
            <person name="Fernandez-Moreno M.A."/>
            <person name="Martinez E."/>
            <person name="Boto L."/>
            <person name="Hopwood D.A."/>
            <person name="Malpartida F."/>
        </authorList>
    </citation>
    <scope>NUCLEOTIDE SEQUENCE [GENOMIC DNA]</scope>
    <source>
        <strain>ATCC BAA-471 / A3(2) / M145</strain>
    </source>
</reference>
<reference key="2">
    <citation type="journal article" date="2002" name="Nature">
        <title>Complete genome sequence of the model actinomycete Streptomyces coelicolor A3(2).</title>
        <authorList>
            <person name="Bentley S.D."/>
            <person name="Chater K.F."/>
            <person name="Cerdeno-Tarraga A.-M."/>
            <person name="Challis G.L."/>
            <person name="Thomson N.R."/>
            <person name="James K.D."/>
            <person name="Harris D.E."/>
            <person name="Quail M.A."/>
            <person name="Kieser H."/>
            <person name="Harper D."/>
            <person name="Bateman A."/>
            <person name="Brown S."/>
            <person name="Chandra G."/>
            <person name="Chen C.W."/>
            <person name="Collins M."/>
            <person name="Cronin A."/>
            <person name="Fraser A."/>
            <person name="Goble A."/>
            <person name="Hidalgo J."/>
            <person name="Hornsby T."/>
            <person name="Howarth S."/>
            <person name="Huang C.-H."/>
            <person name="Kieser T."/>
            <person name="Larke L."/>
            <person name="Murphy L.D."/>
            <person name="Oliver K."/>
            <person name="O'Neil S."/>
            <person name="Rabbinowitsch E."/>
            <person name="Rajandream M.A."/>
            <person name="Rutherford K.M."/>
            <person name="Rutter S."/>
            <person name="Seeger K."/>
            <person name="Saunders D."/>
            <person name="Sharp S."/>
            <person name="Squares R."/>
            <person name="Squares S."/>
            <person name="Taylor K."/>
            <person name="Warren T."/>
            <person name="Wietzorrek A."/>
            <person name="Woodward J.R."/>
            <person name="Barrell B.G."/>
            <person name="Parkhill J."/>
            <person name="Hopwood D.A."/>
        </authorList>
    </citation>
    <scope>NUCLEOTIDE SEQUENCE [LARGE SCALE GENOMIC DNA]</scope>
    <source>
        <strain>ATCC BAA-471 / A3(2) / M145</strain>
    </source>
</reference>
<comment type="miscellaneous">
    <text>This putative ketoacyl synthase lacks the active site cysteine.</text>
</comment>
<comment type="similarity">
    <text evidence="2">Belongs to the thiolase-like superfamily. Beta-ketoacyl-ACP synthases family.</text>
</comment>
<protein>
    <recommendedName>
        <fullName>Actinorhodin polyketide putative beta-ketoacyl synthase 2</fullName>
        <ecNumber>2.3.1.-</ecNumber>
    </recommendedName>
    <alternativeName>
        <fullName>actI ORF2</fullName>
    </alternativeName>
</protein>
<sequence length="407" mass="42550">MSVLITGVGVVAPNGLGLAPYWSAVLDGRHGLGPVTRFDVSRYPATLAGQIDDFHAPDHIPGRLLPQTDPSTRLALTAADWALQDAKADPESLTDYDMGVVTANACGGFDFTHREFRKLWSEGPKSVSVYESFAWFYAVNTGQISIRHGMRGPSSALVAEQAGGLDALGHARRTIRRGTPLVVSGGVDSALDPWGWVSQIASGRISTATDPDRAYLPFDERAAGYVPGEGGAILVLEDSAAAEARGRHDAYGELAGCASTFDPAPGSGRPAGLERAIRLALNDAGTGPEDVDVVFADGAGVPELDAAEARAIGRVFGREGVPVTVPKTTTGRLYSGGGPLDVVTALMSLREGVIAPTAGVTSVPREYGIDLVLGEPRSTAPRTALVLARGRWGFNSAAVLRRFAPTP</sequence>
<gene>
    <name type="ordered locus">SCO5088</name>
    <name type="ORF">SCBAC28G1.14</name>
</gene>
<dbReference type="EC" id="2.3.1.-"/>
<dbReference type="EMBL" id="X63449">
    <property type="protein sequence ID" value="CAA45044.1"/>
    <property type="molecule type" value="Genomic_DNA"/>
</dbReference>
<dbReference type="EMBL" id="AL939122">
    <property type="protein sequence ID" value="CAC44201.1"/>
    <property type="molecule type" value="Genomic_DNA"/>
</dbReference>
<dbReference type="PIR" id="S25841">
    <property type="entry name" value="S25841"/>
</dbReference>
<dbReference type="RefSeq" id="NP_629238.1">
    <property type="nucleotide sequence ID" value="NC_003888.3"/>
</dbReference>
<dbReference type="RefSeq" id="WP_011030048.1">
    <property type="nucleotide sequence ID" value="NZ_VNID01000008.1"/>
</dbReference>
<dbReference type="PDB" id="1TQY">
    <property type="method" value="X-ray"/>
    <property type="resolution" value="2.00 A"/>
    <property type="chains" value="B/D/F/H=2-407"/>
</dbReference>
<dbReference type="PDBsum" id="1TQY"/>
<dbReference type="SMR" id="Q02062"/>
<dbReference type="IntAct" id="Q02062">
    <property type="interactions" value="1"/>
</dbReference>
<dbReference type="STRING" id="100226.gene:17762737"/>
<dbReference type="PaxDb" id="100226-SCO5088"/>
<dbReference type="KEGG" id="sco:SCO5088"/>
<dbReference type="PATRIC" id="fig|100226.15.peg.5168"/>
<dbReference type="eggNOG" id="COG0304">
    <property type="taxonomic scope" value="Bacteria"/>
</dbReference>
<dbReference type="HOGENOM" id="CLU_000022_69_2_11"/>
<dbReference type="InParanoid" id="Q02062"/>
<dbReference type="OrthoDB" id="416758at2"/>
<dbReference type="PhylomeDB" id="Q02062"/>
<dbReference type="EvolutionaryTrace" id="Q02062"/>
<dbReference type="Proteomes" id="UP000001973">
    <property type="component" value="Chromosome"/>
</dbReference>
<dbReference type="GO" id="GO:0004315">
    <property type="term" value="F:3-oxoacyl-[acyl-carrier-protein] synthase activity"/>
    <property type="evidence" value="ECO:0000318"/>
    <property type="project" value="GO_Central"/>
</dbReference>
<dbReference type="GO" id="GO:0017000">
    <property type="term" value="P:antibiotic biosynthetic process"/>
    <property type="evidence" value="ECO:0007669"/>
    <property type="project" value="UniProtKB-KW"/>
</dbReference>
<dbReference type="GO" id="GO:0006633">
    <property type="term" value="P:fatty acid biosynthetic process"/>
    <property type="evidence" value="ECO:0000318"/>
    <property type="project" value="GO_Central"/>
</dbReference>
<dbReference type="CDD" id="cd00832">
    <property type="entry name" value="CLF"/>
    <property type="match status" value="1"/>
</dbReference>
<dbReference type="FunFam" id="3.40.47.10:FF:000106">
    <property type="entry name" value="Actinorhodin polyketide putative beta-ketoacyl synthase 2"/>
    <property type="match status" value="1"/>
</dbReference>
<dbReference type="FunFam" id="3.40.47.10:FF:000089">
    <property type="entry name" value="Putative polyketide beta-ketoacyl synthase 2"/>
    <property type="match status" value="1"/>
</dbReference>
<dbReference type="Gene3D" id="3.40.47.10">
    <property type="match status" value="2"/>
</dbReference>
<dbReference type="InterPro" id="IPR000794">
    <property type="entry name" value="Beta-ketoacyl_synthase"/>
</dbReference>
<dbReference type="InterPro" id="IPR014031">
    <property type="entry name" value="Ketoacyl_synth_C"/>
</dbReference>
<dbReference type="InterPro" id="IPR014030">
    <property type="entry name" value="Ketoacyl_synth_N"/>
</dbReference>
<dbReference type="InterPro" id="IPR020841">
    <property type="entry name" value="PKS_Beta-ketoAc_synthase_dom"/>
</dbReference>
<dbReference type="InterPro" id="IPR016039">
    <property type="entry name" value="Thiolase-like"/>
</dbReference>
<dbReference type="PANTHER" id="PTHR11712:SF322">
    <property type="entry name" value="POLYKETIDE BETA-KETOACYL SYNTHASE 2-RELATED"/>
    <property type="match status" value="1"/>
</dbReference>
<dbReference type="PANTHER" id="PTHR11712">
    <property type="entry name" value="POLYKETIDE SYNTHASE-RELATED"/>
    <property type="match status" value="1"/>
</dbReference>
<dbReference type="Pfam" id="PF00109">
    <property type="entry name" value="ketoacyl-synt"/>
    <property type="match status" value="1"/>
</dbReference>
<dbReference type="Pfam" id="PF02801">
    <property type="entry name" value="Ketoacyl-synt_C"/>
    <property type="match status" value="1"/>
</dbReference>
<dbReference type="SMART" id="SM00825">
    <property type="entry name" value="PKS_KS"/>
    <property type="match status" value="1"/>
</dbReference>
<dbReference type="SUPFAM" id="SSF53901">
    <property type="entry name" value="Thiolase-like"/>
    <property type="match status" value="2"/>
</dbReference>
<dbReference type="PROSITE" id="PS52004">
    <property type="entry name" value="KS3_2"/>
    <property type="match status" value="1"/>
</dbReference>
<proteinExistence type="evidence at protein level"/>
<name>ACTI2_STRCO</name>
<keyword id="KW-0002">3D-structure</keyword>
<keyword id="KW-0012">Acyltransferase</keyword>
<keyword id="KW-0045">Antibiotic biosynthesis</keyword>
<keyword id="KW-1185">Reference proteome</keyword>
<keyword id="KW-0808">Transferase</keyword>
<evidence type="ECO:0000255" key="1">
    <source>
        <dbReference type="PROSITE-ProRule" id="PRU01348"/>
    </source>
</evidence>
<evidence type="ECO:0000305" key="2"/>
<evidence type="ECO:0007829" key="3">
    <source>
        <dbReference type="PDB" id="1TQY"/>
    </source>
</evidence>
<accession>Q02062</accession>
<feature type="chain" id="PRO_0000180349" description="Actinorhodin polyketide putative beta-ketoacyl synthase 2">
    <location>
        <begin position="1"/>
        <end position="407"/>
    </location>
</feature>
<feature type="domain" description="Ketosynthase family 3 (KS3)" evidence="1">
    <location>
        <begin position="1"/>
        <end position="402"/>
    </location>
</feature>
<feature type="strand" evidence="3">
    <location>
        <begin position="3"/>
        <end position="12"/>
    </location>
</feature>
<feature type="strand" evidence="3">
    <location>
        <begin position="15"/>
        <end position="17"/>
    </location>
</feature>
<feature type="helix" evidence="3">
    <location>
        <begin position="18"/>
        <end position="26"/>
    </location>
</feature>
<feature type="strand" evidence="3">
    <location>
        <begin position="32"/>
        <end position="34"/>
    </location>
</feature>
<feature type="turn" evidence="3">
    <location>
        <begin position="36"/>
        <end position="39"/>
    </location>
</feature>
<feature type="helix" evidence="3">
    <location>
        <begin position="40"/>
        <end position="42"/>
    </location>
</feature>
<feature type="strand" evidence="3">
    <location>
        <begin position="47"/>
        <end position="49"/>
    </location>
</feature>
<feature type="helix" evidence="3">
    <location>
        <begin position="56"/>
        <end position="59"/>
    </location>
</feature>
<feature type="turn" evidence="3">
    <location>
        <begin position="62"/>
        <end position="64"/>
    </location>
</feature>
<feature type="helix" evidence="3">
    <location>
        <begin position="65"/>
        <end position="67"/>
    </location>
</feature>
<feature type="helix" evidence="3">
    <location>
        <begin position="70"/>
        <end position="85"/>
    </location>
</feature>
<feature type="helix" evidence="3">
    <location>
        <begin position="90"/>
        <end position="92"/>
    </location>
</feature>
<feature type="helix" evidence="3">
    <location>
        <begin position="95"/>
        <end position="97"/>
    </location>
</feature>
<feature type="strand" evidence="3">
    <location>
        <begin position="98"/>
        <end position="103"/>
    </location>
</feature>
<feature type="helix" evidence="3">
    <location>
        <begin position="109"/>
        <end position="121"/>
    </location>
</feature>
<feature type="helix" evidence="3">
    <location>
        <begin position="124"/>
        <end position="126"/>
    </location>
</feature>
<feature type="helix" evidence="3">
    <location>
        <begin position="131"/>
        <end position="134"/>
    </location>
</feature>
<feature type="helix" evidence="3">
    <location>
        <begin position="139"/>
        <end position="148"/>
    </location>
</feature>
<feature type="strand" evidence="3">
    <location>
        <begin position="155"/>
        <end position="158"/>
    </location>
</feature>
<feature type="helix" evidence="3">
    <location>
        <begin position="160"/>
        <end position="162"/>
    </location>
</feature>
<feature type="helix" evidence="3">
    <location>
        <begin position="163"/>
        <end position="176"/>
    </location>
</feature>
<feature type="strand" evidence="3">
    <location>
        <begin position="180"/>
        <end position="188"/>
    </location>
</feature>
<feature type="helix" evidence="3">
    <location>
        <begin position="193"/>
        <end position="200"/>
    </location>
</feature>
<feature type="helix" evidence="3">
    <location>
        <begin position="211"/>
        <end position="213"/>
    </location>
</feature>
<feature type="strand" evidence="3">
    <location>
        <begin position="230"/>
        <end position="238"/>
    </location>
</feature>
<feature type="helix" evidence="3">
    <location>
        <begin position="239"/>
        <end position="245"/>
    </location>
</feature>
<feature type="strand" evidence="3">
    <location>
        <begin position="251"/>
        <end position="261"/>
    </location>
</feature>
<feature type="helix" evidence="3">
    <location>
        <begin position="273"/>
        <end position="284"/>
    </location>
</feature>
<feature type="helix" evidence="3">
    <location>
        <begin position="288"/>
        <end position="290"/>
    </location>
</feature>
<feature type="strand" evidence="3">
    <location>
        <begin position="293"/>
        <end position="295"/>
    </location>
</feature>
<feature type="helix" evidence="3">
    <location>
        <begin position="302"/>
        <end position="316"/>
    </location>
</feature>
<feature type="strand" evidence="3">
    <location>
        <begin position="321"/>
        <end position="324"/>
    </location>
</feature>
<feature type="helix" evidence="3">
    <location>
        <begin position="326"/>
        <end position="329"/>
    </location>
</feature>
<feature type="helix" evidence="3">
    <location>
        <begin position="334"/>
        <end position="336"/>
    </location>
</feature>
<feature type="helix" evidence="3">
    <location>
        <begin position="337"/>
        <end position="351"/>
    </location>
</feature>
<feature type="helix" evidence="3">
    <location>
        <begin position="365"/>
        <end position="367"/>
    </location>
</feature>
<feature type="strand" evidence="3">
    <location>
        <begin position="373"/>
        <end position="375"/>
    </location>
</feature>
<feature type="strand" evidence="3">
    <location>
        <begin position="382"/>
        <end position="390"/>
    </location>
</feature>
<feature type="turn" evidence="3">
    <location>
        <begin position="391"/>
        <end position="393"/>
    </location>
</feature>
<feature type="strand" evidence="3">
    <location>
        <begin position="394"/>
        <end position="402"/>
    </location>
</feature>
<organism>
    <name type="scientific">Streptomyces coelicolor (strain ATCC BAA-471 / A3(2) / M145)</name>
    <dbReference type="NCBI Taxonomy" id="100226"/>
    <lineage>
        <taxon>Bacteria</taxon>
        <taxon>Bacillati</taxon>
        <taxon>Actinomycetota</taxon>
        <taxon>Actinomycetes</taxon>
        <taxon>Kitasatosporales</taxon>
        <taxon>Streptomycetaceae</taxon>
        <taxon>Streptomyces</taxon>
        <taxon>Streptomyces albidoflavus group</taxon>
    </lineage>
</organism>